<sequence length="564" mass="65654">MSININMPAAAVLRPFRCSQLHVDETRRSGNYRPSAWDSNYIQSLNSQYKEKKCLTRLEGLIEQVKELKGTKMEAVQQLELIDDSQNLGLSYYFQDKIKHILNLIYNDHKYFYDSEAEGMDLYFTALGFRLFRQHGFKVSQEVFDRFKNENGTYFKHDDTKGLLQLYEASFLVREGEETLEQAREFATKSLQRKLDEDGDGIDANIESWIRHSLEIPLHWRAQRLEARWFLDAYARRPDMNPVIFELAKLNFNIVQATQQEELKALSRWWSSLGLAEKLPFVRDRLVESYFWAIPLFEPHQYGYQRKVATKIITLITSLDDVYDIYGTLDELQLFTNLFERWDNASIGRLPEYLQLFYFAIHNFVSEVAYDILKEKGFTSIVYLQRSWVDLLKGYLKEAKWYNSGYTPSLEEYFDNAFMTIGAPPVLSQAYFTLGSSMEKPIIESMYEYDNILRVSGMLVRLPDDLGTSSFEMERGDVPKSVQLYMKETNATEEEAVEHVRFLNREAWKKMNTAEAAGDSPLVSDVVAVAANLGRAAQFMYFDGDGNQSSLQQWIVSMLFEPYA</sequence>
<feature type="chain" id="PRO_0000418950" description="R-linalool synthase">
    <location>
        <begin position="1"/>
        <end position="564"/>
    </location>
</feature>
<feature type="short sequence motif" description="DDXXD motif">
    <location>
        <begin position="320"/>
        <end position="324"/>
    </location>
</feature>
<feature type="binding site" evidence="1">
    <location>
        <position position="320"/>
    </location>
    <ligand>
        <name>Mg(2+)</name>
        <dbReference type="ChEBI" id="CHEBI:18420"/>
        <label>1</label>
    </ligand>
</feature>
<feature type="binding site" evidence="1">
    <location>
        <position position="320"/>
    </location>
    <ligand>
        <name>Mg(2+)</name>
        <dbReference type="ChEBI" id="CHEBI:18420"/>
        <label>2</label>
    </ligand>
</feature>
<feature type="binding site" evidence="1">
    <location>
        <position position="324"/>
    </location>
    <ligand>
        <name>Mg(2+)</name>
        <dbReference type="ChEBI" id="CHEBI:18420"/>
        <label>1</label>
    </ligand>
</feature>
<feature type="binding site" evidence="1">
    <location>
        <position position="324"/>
    </location>
    <ligand>
        <name>Mg(2+)</name>
        <dbReference type="ChEBI" id="CHEBI:18420"/>
        <label>2</label>
    </ligand>
</feature>
<feature type="binding site" evidence="1">
    <location>
        <position position="464"/>
    </location>
    <ligand>
        <name>Mg(2+)</name>
        <dbReference type="ChEBI" id="CHEBI:18420"/>
        <label>3</label>
    </ligand>
</feature>
<feature type="binding site" evidence="1">
    <location>
        <position position="468"/>
    </location>
    <ligand>
        <name>Mg(2+)</name>
        <dbReference type="ChEBI" id="CHEBI:18420"/>
        <label>3</label>
    </ligand>
</feature>
<feature type="binding site" evidence="1">
    <location>
        <position position="472"/>
    </location>
    <ligand>
        <name>Mg(2+)</name>
        <dbReference type="ChEBI" id="CHEBI:18420"/>
        <label>3</label>
    </ligand>
</feature>
<proteinExistence type="evidence at protein level"/>
<keyword id="KW-0456">Lyase</keyword>
<keyword id="KW-0460">Magnesium</keyword>
<keyword id="KW-0464">Manganese</keyword>
<keyword id="KW-0479">Metal-binding</keyword>
<comment type="function">
    <text evidence="2">Specifically catalyzes production of (R)-(-)-linalool, the main component of lavender essential oil.</text>
</comment>
<comment type="catalytic activity">
    <reaction evidence="2">
        <text>(2E)-geranyl diphosphate + H2O = (R)-linalool + diphosphate</text>
        <dbReference type="Rhea" id="RHEA:15809"/>
        <dbReference type="ChEBI" id="CHEBI:28"/>
        <dbReference type="ChEBI" id="CHEBI:15377"/>
        <dbReference type="ChEBI" id="CHEBI:33019"/>
        <dbReference type="ChEBI" id="CHEBI:58057"/>
        <dbReference type="EC" id="4.2.3.26"/>
    </reaction>
</comment>
<comment type="cofactor">
    <cofactor evidence="1">
        <name>Mg(2+)</name>
        <dbReference type="ChEBI" id="CHEBI:18420"/>
    </cofactor>
    <cofactor evidence="1">
        <name>Mn(2+)</name>
        <dbReference type="ChEBI" id="CHEBI:29035"/>
    </cofactor>
    <text evidence="1">Binds 3 Mg(2+) or Mn(2+) ions per subunit.</text>
</comment>
<comment type="biophysicochemical properties">
    <kinetics>
        <KM evidence="2">42.7 uM for geranyl diphosphate</KM>
        <text>kcat is 0.039 sec(-1) with geranyl diphosphate as substrate.</text>
    </kinetics>
    <phDependence>
        <text evidence="2">Optimum pH is 7.0.</text>
    </phDependence>
</comment>
<comment type="similarity">
    <text evidence="3">Belongs to the terpene synthase family.</text>
</comment>
<protein>
    <recommendedName>
        <fullName>R-linalool synthase</fullName>
        <shortName>LaLINS</shortName>
        <ecNumber>4.2.3.26</ecNumber>
    </recommendedName>
</protein>
<organism>
    <name type="scientific">Lavandula angustifolia</name>
    <name type="common">Lavender</name>
    <dbReference type="NCBI Taxonomy" id="39329"/>
    <lineage>
        <taxon>Eukaryota</taxon>
        <taxon>Viridiplantae</taxon>
        <taxon>Streptophyta</taxon>
        <taxon>Embryophyta</taxon>
        <taxon>Tracheophyta</taxon>
        <taxon>Spermatophyta</taxon>
        <taxon>Magnoliopsida</taxon>
        <taxon>eudicotyledons</taxon>
        <taxon>Gunneridae</taxon>
        <taxon>Pentapetalae</taxon>
        <taxon>asterids</taxon>
        <taxon>lamiids</taxon>
        <taxon>Lamiales</taxon>
        <taxon>Lamiaceae</taxon>
        <taxon>Nepetoideae</taxon>
        <taxon>Ocimeae</taxon>
        <taxon>Lavandulinae</taxon>
        <taxon>Lavandula</taxon>
    </lineage>
</organism>
<evidence type="ECO:0000250" key="1"/>
<evidence type="ECO:0000269" key="2">
    <source>
    </source>
</evidence>
<evidence type="ECO:0000305" key="3"/>
<accession>Q2XSC5</accession>
<dbReference type="EC" id="4.2.3.26"/>
<dbReference type="EMBL" id="DQ263741">
    <property type="protein sequence ID" value="ABB73045.1"/>
    <property type="molecule type" value="mRNA"/>
</dbReference>
<dbReference type="SMR" id="Q2XSC5"/>
<dbReference type="BioCyc" id="MetaCyc:MONOMER-13458"/>
<dbReference type="GO" id="GO:0000287">
    <property type="term" value="F:magnesium ion binding"/>
    <property type="evidence" value="ECO:0007669"/>
    <property type="project" value="InterPro"/>
</dbReference>
<dbReference type="GO" id="GO:0050550">
    <property type="term" value="F:pinene synthase activity"/>
    <property type="evidence" value="ECO:0007669"/>
    <property type="project" value="UniProtKB-ARBA"/>
</dbReference>
<dbReference type="GO" id="GO:0034008">
    <property type="term" value="F:R-linalool synthase activity"/>
    <property type="evidence" value="ECO:0007669"/>
    <property type="project" value="UniProtKB-EC"/>
</dbReference>
<dbReference type="GO" id="GO:0046248">
    <property type="term" value="P:alpha-pinene biosynthetic process"/>
    <property type="evidence" value="ECO:0007669"/>
    <property type="project" value="UniProtKB-ARBA"/>
</dbReference>
<dbReference type="GO" id="GO:0016102">
    <property type="term" value="P:diterpenoid biosynthetic process"/>
    <property type="evidence" value="ECO:0007669"/>
    <property type="project" value="InterPro"/>
</dbReference>
<dbReference type="GO" id="GO:0010597">
    <property type="term" value="P:green leaf volatile biosynthetic process"/>
    <property type="evidence" value="ECO:0007669"/>
    <property type="project" value="UniProtKB-ARBA"/>
</dbReference>
<dbReference type="GO" id="GO:0016099">
    <property type="term" value="P:monoterpenoid biosynthetic process"/>
    <property type="evidence" value="ECO:0007669"/>
    <property type="project" value="UniProtKB-ARBA"/>
</dbReference>
<dbReference type="CDD" id="cd00684">
    <property type="entry name" value="Terpene_cyclase_plant_C1"/>
    <property type="match status" value="1"/>
</dbReference>
<dbReference type="FunFam" id="1.10.600.10:FF:000007">
    <property type="entry name" value="Isoprene synthase, chloroplastic"/>
    <property type="match status" value="1"/>
</dbReference>
<dbReference type="FunFam" id="1.50.10.130:FF:000001">
    <property type="entry name" value="Isoprene synthase, chloroplastic"/>
    <property type="match status" value="1"/>
</dbReference>
<dbReference type="Gene3D" id="1.10.600.10">
    <property type="entry name" value="Farnesyl Diphosphate Synthase"/>
    <property type="match status" value="1"/>
</dbReference>
<dbReference type="Gene3D" id="1.50.10.130">
    <property type="entry name" value="Terpene synthase, N-terminal domain"/>
    <property type="match status" value="1"/>
</dbReference>
<dbReference type="InterPro" id="IPR008949">
    <property type="entry name" value="Isoprenoid_synthase_dom_sf"/>
</dbReference>
<dbReference type="InterPro" id="IPR034741">
    <property type="entry name" value="Terpene_cyclase-like_1_C"/>
</dbReference>
<dbReference type="InterPro" id="IPR044814">
    <property type="entry name" value="Terpene_cyclase_plant_C1"/>
</dbReference>
<dbReference type="InterPro" id="IPR001906">
    <property type="entry name" value="Terpene_synth_N"/>
</dbReference>
<dbReference type="InterPro" id="IPR036965">
    <property type="entry name" value="Terpene_synth_N_sf"/>
</dbReference>
<dbReference type="InterPro" id="IPR050148">
    <property type="entry name" value="Terpene_synthase-like"/>
</dbReference>
<dbReference type="InterPro" id="IPR005630">
    <property type="entry name" value="Terpene_synthase_metal-bd"/>
</dbReference>
<dbReference type="InterPro" id="IPR008930">
    <property type="entry name" value="Terpenoid_cyclase/PrenylTrfase"/>
</dbReference>
<dbReference type="PANTHER" id="PTHR31225">
    <property type="entry name" value="OS04G0344100 PROTEIN-RELATED"/>
    <property type="match status" value="1"/>
</dbReference>
<dbReference type="PANTHER" id="PTHR31225:SF9">
    <property type="entry name" value="TERPENE SYNTHASE 10"/>
    <property type="match status" value="1"/>
</dbReference>
<dbReference type="Pfam" id="PF01397">
    <property type="entry name" value="Terpene_synth"/>
    <property type="match status" value="1"/>
</dbReference>
<dbReference type="Pfam" id="PF03936">
    <property type="entry name" value="Terpene_synth_C"/>
    <property type="match status" value="1"/>
</dbReference>
<dbReference type="SFLD" id="SFLDS00005">
    <property type="entry name" value="Isoprenoid_Synthase_Type_I"/>
    <property type="match status" value="1"/>
</dbReference>
<dbReference type="SFLD" id="SFLDG01019">
    <property type="entry name" value="Terpene_Cyclase_Like_1_C_Termi"/>
    <property type="match status" value="1"/>
</dbReference>
<dbReference type="SFLD" id="SFLDG01014">
    <property type="entry name" value="Terpene_Cyclase_Like_1_N-term"/>
    <property type="match status" value="1"/>
</dbReference>
<dbReference type="SUPFAM" id="SSF48239">
    <property type="entry name" value="Terpenoid cyclases/Protein prenyltransferases"/>
    <property type="match status" value="1"/>
</dbReference>
<dbReference type="SUPFAM" id="SSF48576">
    <property type="entry name" value="Terpenoid synthases"/>
    <property type="match status" value="1"/>
</dbReference>
<reference key="1">
    <citation type="journal article" date="2007" name="Arch. Biochem. Biophys.">
        <title>Cloning and functional characterization of three terpene synthases from lavender (Lavandula angustifolia).</title>
        <authorList>
            <person name="Landmann C."/>
            <person name="Fink B."/>
            <person name="Festner M."/>
            <person name="Dregus M."/>
            <person name="Engel K.H."/>
            <person name="Schwab W."/>
        </authorList>
    </citation>
    <scope>NUCLEOTIDE SEQUENCE [MRNA]</scope>
    <scope>FUNCTION</scope>
    <scope>CATALYTIC ACTIVITY</scope>
    <scope>BIOPHYSICOCHEMICAL PROPERTIES</scope>
</reference>
<name>LALIN_LAVAN</name>